<sequence>MLMPKRTKYRKMMKGRNRGYANRGTEFTFGEFALKATEAGRINSRQIEAARIALTRFVKRQGKTWIRVFPDKPLTKKPLETRMGKGKGAVEEWVMNIKPGRIIYEMAGVSEEMAREALTLAMHKLPFKTKFVTRESQNEIY</sequence>
<keyword id="KW-0687">Ribonucleoprotein</keyword>
<keyword id="KW-0689">Ribosomal protein</keyword>
<keyword id="KW-0694">RNA-binding</keyword>
<keyword id="KW-0699">rRNA-binding</keyword>
<keyword id="KW-0820">tRNA-binding</keyword>
<name>RL16_CAMJJ</name>
<evidence type="ECO:0000255" key="1">
    <source>
        <dbReference type="HAMAP-Rule" id="MF_01342"/>
    </source>
</evidence>
<evidence type="ECO:0000305" key="2"/>
<organism>
    <name type="scientific">Campylobacter jejuni subsp. jejuni serotype O:23/36 (strain 81-176)</name>
    <dbReference type="NCBI Taxonomy" id="354242"/>
    <lineage>
        <taxon>Bacteria</taxon>
        <taxon>Pseudomonadati</taxon>
        <taxon>Campylobacterota</taxon>
        <taxon>Epsilonproteobacteria</taxon>
        <taxon>Campylobacterales</taxon>
        <taxon>Campylobacteraceae</taxon>
        <taxon>Campylobacter</taxon>
    </lineage>
</organism>
<protein>
    <recommendedName>
        <fullName evidence="1">Large ribosomal subunit protein uL16</fullName>
    </recommendedName>
    <alternativeName>
        <fullName evidence="2">50S ribosomal protein L16</fullName>
    </alternativeName>
</protein>
<proteinExistence type="inferred from homology"/>
<feature type="chain" id="PRO_1000054601" description="Large ribosomal subunit protein uL16">
    <location>
        <begin position="1"/>
        <end position="141"/>
    </location>
</feature>
<comment type="function">
    <text evidence="1">Binds 23S rRNA and is also seen to make contacts with the A and possibly P site tRNAs.</text>
</comment>
<comment type="subunit">
    <text evidence="1">Part of the 50S ribosomal subunit.</text>
</comment>
<comment type="similarity">
    <text evidence="1">Belongs to the universal ribosomal protein uL16 family.</text>
</comment>
<dbReference type="EMBL" id="CP000538">
    <property type="protein sequence ID" value="EAQ72556.1"/>
    <property type="molecule type" value="Genomic_DNA"/>
</dbReference>
<dbReference type="RefSeq" id="WP_002779441.1">
    <property type="nucleotide sequence ID" value="NC_008787.1"/>
</dbReference>
<dbReference type="SMR" id="A1W1V3"/>
<dbReference type="GeneID" id="66544936"/>
<dbReference type="KEGG" id="cjj:CJJ81176_1697"/>
<dbReference type="eggNOG" id="COG0197">
    <property type="taxonomic scope" value="Bacteria"/>
</dbReference>
<dbReference type="HOGENOM" id="CLU_078858_2_1_7"/>
<dbReference type="Proteomes" id="UP000000646">
    <property type="component" value="Chromosome"/>
</dbReference>
<dbReference type="GO" id="GO:0022625">
    <property type="term" value="C:cytosolic large ribosomal subunit"/>
    <property type="evidence" value="ECO:0007669"/>
    <property type="project" value="TreeGrafter"/>
</dbReference>
<dbReference type="GO" id="GO:0019843">
    <property type="term" value="F:rRNA binding"/>
    <property type="evidence" value="ECO:0007669"/>
    <property type="project" value="UniProtKB-UniRule"/>
</dbReference>
<dbReference type="GO" id="GO:0003735">
    <property type="term" value="F:structural constituent of ribosome"/>
    <property type="evidence" value="ECO:0007669"/>
    <property type="project" value="InterPro"/>
</dbReference>
<dbReference type="GO" id="GO:0000049">
    <property type="term" value="F:tRNA binding"/>
    <property type="evidence" value="ECO:0007669"/>
    <property type="project" value="UniProtKB-KW"/>
</dbReference>
<dbReference type="GO" id="GO:0006412">
    <property type="term" value="P:translation"/>
    <property type="evidence" value="ECO:0007669"/>
    <property type="project" value="UniProtKB-UniRule"/>
</dbReference>
<dbReference type="CDD" id="cd01433">
    <property type="entry name" value="Ribosomal_L16_L10e"/>
    <property type="match status" value="1"/>
</dbReference>
<dbReference type="FunFam" id="3.90.1170.10:FF:000001">
    <property type="entry name" value="50S ribosomal protein L16"/>
    <property type="match status" value="1"/>
</dbReference>
<dbReference type="Gene3D" id="3.90.1170.10">
    <property type="entry name" value="Ribosomal protein L10e/L16"/>
    <property type="match status" value="1"/>
</dbReference>
<dbReference type="HAMAP" id="MF_01342">
    <property type="entry name" value="Ribosomal_uL16"/>
    <property type="match status" value="1"/>
</dbReference>
<dbReference type="InterPro" id="IPR047873">
    <property type="entry name" value="Ribosomal_uL16"/>
</dbReference>
<dbReference type="InterPro" id="IPR000114">
    <property type="entry name" value="Ribosomal_uL16_bact-type"/>
</dbReference>
<dbReference type="InterPro" id="IPR020798">
    <property type="entry name" value="Ribosomal_uL16_CS"/>
</dbReference>
<dbReference type="InterPro" id="IPR016180">
    <property type="entry name" value="Ribosomal_uL16_dom"/>
</dbReference>
<dbReference type="InterPro" id="IPR036920">
    <property type="entry name" value="Ribosomal_uL16_sf"/>
</dbReference>
<dbReference type="NCBIfam" id="TIGR01164">
    <property type="entry name" value="rplP_bact"/>
    <property type="match status" value="1"/>
</dbReference>
<dbReference type="PANTHER" id="PTHR12220">
    <property type="entry name" value="50S/60S RIBOSOMAL PROTEIN L16"/>
    <property type="match status" value="1"/>
</dbReference>
<dbReference type="PANTHER" id="PTHR12220:SF13">
    <property type="entry name" value="LARGE RIBOSOMAL SUBUNIT PROTEIN UL16M"/>
    <property type="match status" value="1"/>
</dbReference>
<dbReference type="Pfam" id="PF00252">
    <property type="entry name" value="Ribosomal_L16"/>
    <property type="match status" value="1"/>
</dbReference>
<dbReference type="PRINTS" id="PR00060">
    <property type="entry name" value="RIBOSOMALL16"/>
</dbReference>
<dbReference type="SUPFAM" id="SSF54686">
    <property type="entry name" value="Ribosomal protein L16p/L10e"/>
    <property type="match status" value="1"/>
</dbReference>
<dbReference type="PROSITE" id="PS00701">
    <property type="entry name" value="RIBOSOMAL_L16_2"/>
    <property type="match status" value="1"/>
</dbReference>
<accession>A1W1V3</accession>
<gene>
    <name evidence="1" type="primary">rplP</name>
    <name type="ordered locus">CJJ81176_1697</name>
</gene>
<reference key="1">
    <citation type="submission" date="2006-12" db="EMBL/GenBank/DDBJ databases">
        <authorList>
            <person name="Fouts D.E."/>
            <person name="Nelson K.E."/>
            <person name="Sebastian Y."/>
        </authorList>
    </citation>
    <scope>NUCLEOTIDE SEQUENCE [LARGE SCALE GENOMIC DNA]</scope>
    <source>
        <strain>81-176</strain>
    </source>
</reference>